<proteinExistence type="inferred from homology"/>
<protein>
    <recommendedName>
        <fullName evidence="1">tRNA(Met) cytidine acetate ligase</fullName>
        <ecNumber evidence="1">6.3.4.-</ecNumber>
    </recommendedName>
</protein>
<keyword id="KW-0067">ATP-binding</keyword>
<keyword id="KW-0963">Cytoplasm</keyword>
<keyword id="KW-0436">Ligase</keyword>
<keyword id="KW-0547">Nucleotide-binding</keyword>
<keyword id="KW-1185">Reference proteome</keyword>
<keyword id="KW-0694">RNA-binding</keyword>
<keyword id="KW-0819">tRNA processing</keyword>
<keyword id="KW-0820">tRNA-binding</keyword>
<reference key="1">
    <citation type="submission" date="2005-10" db="EMBL/GenBank/DDBJ databases">
        <title>Complete sequence of Pelobacter carbinolicus DSM 2380.</title>
        <authorList>
            <person name="Copeland A."/>
            <person name="Lucas S."/>
            <person name="Lapidus A."/>
            <person name="Barry K."/>
            <person name="Detter J.C."/>
            <person name="Glavina T."/>
            <person name="Hammon N."/>
            <person name="Israni S."/>
            <person name="Pitluck S."/>
            <person name="Chertkov O."/>
            <person name="Schmutz J."/>
            <person name="Larimer F."/>
            <person name="Land M."/>
            <person name="Kyrpides N."/>
            <person name="Ivanova N."/>
            <person name="Richardson P."/>
        </authorList>
    </citation>
    <scope>NUCLEOTIDE SEQUENCE [LARGE SCALE GENOMIC DNA]</scope>
    <source>
        <strain>DSM 2380 / NBRC 103641 / GraBd1</strain>
    </source>
</reference>
<name>TMCAL_SYNC1</name>
<accession>Q3A287</accession>
<sequence length="419" mass="45974">MRAVGLITEYNPFHNGHLHHLRASREAAGAEVAVAVMSGHFLQRGEPALLDKWRRAEMALRCGVDVVVELPFPFACASAPHFARGAVQCLDALGVDSLCFGSESGDLGALQRCAQLLEECGEQVAERTATLLRRGMHYAAARSQVCAELSGCDAATLPLHQPNNILGIEYLRALRATGSAMQPFTISRLGAGYHDDAVGPGNIASASGIRKRLAMGETVDELLPAPAVDVVAGARADRLFPDEDLLHRLLLAQIFRGRDYLQSLYQVESGIDARLTDAAATSRDWQALVDAVKVRQFTRTRIQRTLMYILNDVRGDLMASLLAAGPLYLRLLGSSPRGRAFLGAARKRRRLPMVTNLSRIYSQLKRTYGPRSEDYRLALAMLELDLRATRNYSLLLPGWSGVSRERDFFEAPLDIHSAI</sequence>
<feature type="chain" id="PRO_0000300186" description="tRNA(Met) cytidine acetate ligase">
    <location>
        <begin position="1"/>
        <end position="419"/>
    </location>
</feature>
<feature type="binding site" evidence="1">
    <location>
        <begin position="7"/>
        <end position="20"/>
    </location>
    <ligand>
        <name>ATP</name>
        <dbReference type="ChEBI" id="CHEBI:30616"/>
    </ligand>
</feature>
<feature type="binding site" evidence="1">
    <location>
        <position position="101"/>
    </location>
    <ligand>
        <name>ATP</name>
        <dbReference type="ChEBI" id="CHEBI:30616"/>
    </ligand>
</feature>
<feature type="binding site" evidence="1">
    <location>
        <position position="163"/>
    </location>
    <ligand>
        <name>ATP</name>
        <dbReference type="ChEBI" id="CHEBI:30616"/>
    </ligand>
</feature>
<feature type="binding site" evidence="1">
    <location>
        <position position="188"/>
    </location>
    <ligand>
        <name>ATP</name>
        <dbReference type="ChEBI" id="CHEBI:30616"/>
    </ligand>
</feature>
<organism>
    <name type="scientific">Syntrophotalea carbinolica (strain DSM 2380 / NBRC 103641 / GraBd1)</name>
    <name type="common">Pelobacter carbinolicus</name>
    <dbReference type="NCBI Taxonomy" id="338963"/>
    <lineage>
        <taxon>Bacteria</taxon>
        <taxon>Pseudomonadati</taxon>
        <taxon>Thermodesulfobacteriota</taxon>
        <taxon>Desulfuromonadia</taxon>
        <taxon>Desulfuromonadales</taxon>
        <taxon>Syntrophotaleaceae</taxon>
        <taxon>Syntrophotalea</taxon>
    </lineage>
</organism>
<comment type="function">
    <text evidence="1">Catalyzes the formation of N(4)-acetylcytidine (ac(4)C) at the wobble position of elongator tRNA(Met), using acetate and ATP as substrates. First activates an acetate ion to form acetyladenylate (Ac-AMP) and then transfers the acetyl group to tRNA to form ac(4)C34.</text>
</comment>
<comment type="catalytic activity">
    <reaction evidence="1">
        <text>cytidine(34) in elongator tRNA(Met) + acetate + ATP = N(4)-acetylcytidine(34) in elongator tRNA(Met) + AMP + diphosphate</text>
        <dbReference type="Rhea" id="RHEA:58144"/>
        <dbReference type="Rhea" id="RHEA-COMP:10693"/>
        <dbReference type="Rhea" id="RHEA-COMP:10694"/>
        <dbReference type="ChEBI" id="CHEBI:30089"/>
        <dbReference type="ChEBI" id="CHEBI:30616"/>
        <dbReference type="ChEBI" id="CHEBI:33019"/>
        <dbReference type="ChEBI" id="CHEBI:74900"/>
        <dbReference type="ChEBI" id="CHEBI:82748"/>
        <dbReference type="ChEBI" id="CHEBI:456215"/>
    </reaction>
</comment>
<comment type="subcellular location">
    <subcellularLocation>
        <location evidence="1">Cytoplasm</location>
    </subcellularLocation>
</comment>
<comment type="similarity">
    <text evidence="1">Belongs to the TmcAL family.</text>
</comment>
<gene>
    <name evidence="1" type="primary">tmcAL</name>
    <name type="ordered locus">Pcar_2281</name>
</gene>
<dbReference type="EC" id="6.3.4.-" evidence="1"/>
<dbReference type="EMBL" id="CP000142">
    <property type="protein sequence ID" value="ABA89520.1"/>
    <property type="molecule type" value="Genomic_DNA"/>
</dbReference>
<dbReference type="RefSeq" id="WP_011342038.1">
    <property type="nucleotide sequence ID" value="NC_007498.2"/>
</dbReference>
<dbReference type="SMR" id="Q3A287"/>
<dbReference type="STRING" id="338963.Pcar_2281"/>
<dbReference type="KEGG" id="pca:Pcar_2281"/>
<dbReference type="eggNOG" id="COG1323">
    <property type="taxonomic scope" value="Bacteria"/>
</dbReference>
<dbReference type="HOGENOM" id="CLU_038915_0_2_7"/>
<dbReference type="OrthoDB" id="9769796at2"/>
<dbReference type="Proteomes" id="UP000002534">
    <property type="component" value="Chromosome"/>
</dbReference>
<dbReference type="GO" id="GO:0005737">
    <property type="term" value="C:cytoplasm"/>
    <property type="evidence" value="ECO:0007669"/>
    <property type="project" value="UniProtKB-SubCell"/>
</dbReference>
<dbReference type="GO" id="GO:0005524">
    <property type="term" value="F:ATP binding"/>
    <property type="evidence" value="ECO:0007669"/>
    <property type="project" value="UniProtKB-KW"/>
</dbReference>
<dbReference type="GO" id="GO:0016879">
    <property type="term" value="F:ligase activity, forming carbon-nitrogen bonds"/>
    <property type="evidence" value="ECO:0007669"/>
    <property type="project" value="UniProtKB-UniRule"/>
</dbReference>
<dbReference type="GO" id="GO:0000049">
    <property type="term" value="F:tRNA binding"/>
    <property type="evidence" value="ECO:0007669"/>
    <property type="project" value="UniProtKB-KW"/>
</dbReference>
<dbReference type="GO" id="GO:0006400">
    <property type="term" value="P:tRNA modification"/>
    <property type="evidence" value="ECO:0007669"/>
    <property type="project" value="UniProtKB-UniRule"/>
</dbReference>
<dbReference type="Gene3D" id="3.40.50.620">
    <property type="entry name" value="HUPs"/>
    <property type="match status" value="1"/>
</dbReference>
<dbReference type="HAMAP" id="MF_01539">
    <property type="entry name" value="TmcAL"/>
    <property type="match status" value="1"/>
</dbReference>
<dbReference type="InterPro" id="IPR014729">
    <property type="entry name" value="Rossmann-like_a/b/a_fold"/>
</dbReference>
<dbReference type="InterPro" id="IPR008513">
    <property type="entry name" value="tRNA(Met)_cyd_acetate_ligase"/>
</dbReference>
<dbReference type="NCBIfam" id="NF010191">
    <property type="entry name" value="PRK13670.1"/>
    <property type="match status" value="1"/>
</dbReference>
<dbReference type="PANTHER" id="PTHR37825">
    <property type="entry name" value="TRNA(MET) CYTIDINE ACETATE LIGASE"/>
    <property type="match status" value="1"/>
</dbReference>
<dbReference type="PANTHER" id="PTHR37825:SF1">
    <property type="entry name" value="TRNA(MET) CYTIDINE ACETATE LIGASE"/>
    <property type="match status" value="1"/>
</dbReference>
<dbReference type="Pfam" id="PF05636">
    <property type="entry name" value="HIGH_NTase1"/>
    <property type="match status" value="1"/>
</dbReference>
<dbReference type="SUPFAM" id="SSF52374">
    <property type="entry name" value="Nucleotidylyl transferase"/>
    <property type="match status" value="1"/>
</dbReference>
<evidence type="ECO:0000255" key="1">
    <source>
        <dbReference type="HAMAP-Rule" id="MF_01539"/>
    </source>
</evidence>